<dbReference type="EC" id="3.4.21.-" evidence="5"/>
<dbReference type="EMBL" id="JX684014">
    <property type="protein sequence ID" value="AFZ84667.2"/>
    <property type="molecule type" value="mRNA"/>
</dbReference>
<dbReference type="SMR" id="R4IR27"/>
<dbReference type="GlyCosmos" id="R4IR27">
    <property type="glycosylation" value="2 sites, No reported glycans"/>
</dbReference>
<dbReference type="GO" id="GO:0005576">
    <property type="term" value="C:extracellular region"/>
    <property type="evidence" value="ECO:0007669"/>
    <property type="project" value="UniProtKB-SubCell"/>
</dbReference>
<dbReference type="GO" id="GO:0004252">
    <property type="term" value="F:serine-type endopeptidase activity"/>
    <property type="evidence" value="ECO:0007669"/>
    <property type="project" value="InterPro"/>
</dbReference>
<dbReference type="GO" id="GO:0006508">
    <property type="term" value="P:proteolysis"/>
    <property type="evidence" value="ECO:0007669"/>
    <property type="project" value="UniProtKB-KW"/>
</dbReference>
<dbReference type="CDD" id="cd04077">
    <property type="entry name" value="Peptidases_S8_PCSK9_ProteinaseK_like"/>
    <property type="match status" value="1"/>
</dbReference>
<dbReference type="FunFam" id="3.40.50.200:FF:000014">
    <property type="entry name" value="Proteinase K"/>
    <property type="match status" value="1"/>
</dbReference>
<dbReference type="Gene3D" id="3.30.70.80">
    <property type="entry name" value="Peptidase S8 propeptide/proteinase inhibitor I9"/>
    <property type="match status" value="1"/>
</dbReference>
<dbReference type="Gene3D" id="3.40.50.200">
    <property type="entry name" value="Peptidase S8/S53 domain"/>
    <property type="match status" value="1"/>
</dbReference>
<dbReference type="InterPro" id="IPR034193">
    <property type="entry name" value="PCSK9_ProteinaseK-like"/>
</dbReference>
<dbReference type="InterPro" id="IPR000209">
    <property type="entry name" value="Peptidase_S8/S53_dom"/>
</dbReference>
<dbReference type="InterPro" id="IPR036852">
    <property type="entry name" value="Peptidase_S8/S53_dom_sf"/>
</dbReference>
<dbReference type="InterPro" id="IPR023827">
    <property type="entry name" value="Peptidase_S8_Asp-AS"/>
</dbReference>
<dbReference type="InterPro" id="IPR022398">
    <property type="entry name" value="Peptidase_S8_His-AS"/>
</dbReference>
<dbReference type="InterPro" id="IPR023828">
    <property type="entry name" value="Peptidase_S8_Ser-AS"/>
</dbReference>
<dbReference type="InterPro" id="IPR050131">
    <property type="entry name" value="Peptidase_S8_subtilisin-like"/>
</dbReference>
<dbReference type="InterPro" id="IPR015500">
    <property type="entry name" value="Peptidase_S8_subtilisin-rel"/>
</dbReference>
<dbReference type="InterPro" id="IPR010259">
    <property type="entry name" value="S8pro/Inhibitor_I9"/>
</dbReference>
<dbReference type="InterPro" id="IPR037045">
    <property type="entry name" value="S8pro/Inhibitor_I9_sf"/>
</dbReference>
<dbReference type="PANTHER" id="PTHR43806:SF58">
    <property type="entry name" value="ALKALINE PROTEASE 1-RELATED"/>
    <property type="match status" value="1"/>
</dbReference>
<dbReference type="PANTHER" id="PTHR43806">
    <property type="entry name" value="PEPTIDASE S8"/>
    <property type="match status" value="1"/>
</dbReference>
<dbReference type="Pfam" id="PF05922">
    <property type="entry name" value="Inhibitor_I9"/>
    <property type="match status" value="1"/>
</dbReference>
<dbReference type="Pfam" id="PF00082">
    <property type="entry name" value="Peptidase_S8"/>
    <property type="match status" value="1"/>
</dbReference>
<dbReference type="PRINTS" id="PR00723">
    <property type="entry name" value="SUBTILISIN"/>
</dbReference>
<dbReference type="SUPFAM" id="SSF54897">
    <property type="entry name" value="Protease propeptides/inhibitors"/>
    <property type="match status" value="1"/>
</dbReference>
<dbReference type="SUPFAM" id="SSF52743">
    <property type="entry name" value="Subtilisin-like"/>
    <property type="match status" value="1"/>
</dbReference>
<dbReference type="PROSITE" id="PS51892">
    <property type="entry name" value="SUBTILASE"/>
    <property type="match status" value="1"/>
</dbReference>
<dbReference type="PROSITE" id="PS00136">
    <property type="entry name" value="SUBTILASE_ASP"/>
    <property type="match status" value="1"/>
</dbReference>
<dbReference type="PROSITE" id="PS00137">
    <property type="entry name" value="SUBTILASE_HIS"/>
    <property type="match status" value="1"/>
</dbReference>
<dbReference type="PROSITE" id="PS00138">
    <property type="entry name" value="SUBTILASE_SER"/>
    <property type="match status" value="1"/>
</dbReference>
<reference key="1">
    <citation type="journal article" date="2013" name="J. Biol. Chem.">
        <title>Purification and characterization of AsES protein: a subtilisin secreted by Acremonium strictum is a novel plant defense elicitor.</title>
        <authorList>
            <person name="Chalfoun N.R."/>
            <person name="Grellet-Bournonville C.F."/>
            <person name="Martinez-Zamora M.G."/>
            <person name="Diaz-Perales A."/>
            <person name="Castagnaro A.P."/>
            <person name="Diaz-Ricci J.C."/>
        </authorList>
    </citation>
    <scope>NUCLEOTIDE SEQUENCE [MRNA]</scope>
    <scope>PROTEIN SEQUENCE OF 106-115; 202-226 AND 360-379</scope>
    <scope>SUBCELLULAR LOCATION</scope>
    <scope>FUNCTION</scope>
    <scope>CATALYTIC ACTIVITY</scope>
    <scope>ACTIVITY REGULATION</scope>
    <source>
        <strain>SS71</strain>
    </source>
</reference>
<reference key="2">
    <citation type="journal article" date="2015" name="Plant Physiol. Biochem.">
        <title>The defence elicitor AsES causes a rapid and transient membrane depolarization, a triphasic oxidative burst and the accumulation of nitric oxide.</title>
        <authorList>
            <person name="Martos G.G."/>
            <person name="Teran M.M."/>
            <person name="Diaz Ricci J.C."/>
        </authorList>
    </citation>
    <scope>FUNCTION</scope>
</reference>
<reference key="3">
    <citation type="journal article" date="2015" name="Plant Sci.">
        <title>The novel elicitor AsES triggers a defense response against Botrytis cinerea in Arabidopsis thaliana.</title>
        <authorList>
            <person name="Hael-Conrad V."/>
            <person name="Abou-Mansour E."/>
            <person name="Diaz-Ricci J.C."/>
            <person name="Metraux J.P."/>
            <person name="Serrano M."/>
        </authorList>
    </citation>
    <scope>FUNCTION</scope>
</reference>
<reference key="4">
    <citation type="journal article" date="2018" name="Front. Plant Sci.">
        <title>Elicitor-Based biostimulant PSP1 protects soybean against late season diseases in field trials.</title>
        <authorList>
            <person name="Chalfoun N.R."/>
            <person name="Durman S.B."/>
            <person name="Gonzalez-Montaner J."/>
            <person name="Reznikov S."/>
            <person name="De Lisi V."/>
            <person name="Gonzalez V."/>
            <person name="Moretti E.R."/>
            <person name="Devani M.R."/>
            <person name="Ploper L.D."/>
            <person name="Castagnaro A.P."/>
            <person name="Welin B."/>
        </authorList>
    </citation>
    <scope>BIOTECHNOLOGY</scope>
</reference>
<reference key="5">
    <citation type="journal article" date="2018" name="Front. Plant Sci.">
        <title>Development of PSP1, a biostimulant based on the elicitor AsES for disease management in monocot and dicot crops.</title>
        <authorList>
            <person name="Chalfoun N.R."/>
            <person name="Durman S.B."/>
            <person name="Budeguer F."/>
            <person name="Caro M.D.P."/>
            <person name="Bertani R.P."/>
            <person name="Di Peto P."/>
            <person name="Stenglein S.A."/>
            <person name="Filippone M.P."/>
            <person name="Moretti E.R."/>
            <person name="Diaz Ricci J.C."/>
            <person name="Welin B."/>
            <person name="Castagnaro A.P."/>
        </authorList>
    </citation>
    <scope>BIOTECHNOLOGY</scope>
</reference>
<reference key="6">
    <citation type="journal article" date="2018" name="Mol. Plant Microbe Interact.">
        <title>The elicitor protein AsES induces a systemic acquired resistance response accompanied by systemic microbursts and micro-hypersensitive responses in Fragaria ananassa.</title>
        <authorList>
            <person name="Hael-Conrad V."/>
            <person name="Perato S.M."/>
            <person name="Arias M.E."/>
            <person name="Martinez-Zamora M.G."/>
            <person name="Di Peto P.L.A."/>
            <person name="Martos G.G."/>
            <person name="Castagnaro A.P."/>
            <person name="Diaz-Ricci J.C."/>
            <person name="Chalfoun N.R."/>
        </authorList>
    </citation>
    <scope>FUNCTION</scope>
</reference>
<keyword id="KW-0903">Direct protein sequencing</keyword>
<keyword id="KW-1015">Disulfide bond</keyword>
<keyword id="KW-0325">Glycoprotein</keyword>
<keyword id="KW-0378">Hydrolase</keyword>
<keyword id="KW-0645">Protease</keyword>
<keyword id="KW-0964">Secreted</keyword>
<keyword id="KW-0720">Serine protease</keyword>
<keyword id="KW-0732">Signal</keyword>
<keyword id="KW-0865">Zymogen</keyword>
<gene>
    <name evidence="11" type="primary">AsES</name>
</gene>
<proteinExistence type="evidence at protein level"/>
<feature type="signal peptide" evidence="2">
    <location>
        <begin position="1"/>
        <end position="15"/>
    </location>
</feature>
<feature type="propeptide" id="PRO_0000447370" description="Removed in mature form" evidence="13">
    <location>
        <begin position="16"/>
        <end position="105"/>
    </location>
</feature>
<feature type="chain" id="PRO_5013379825" description="Subtilisin-like serine protease AsES">
    <location>
        <begin position="106"/>
        <end position="388"/>
    </location>
</feature>
<feature type="domain" description="Peptidase S8" evidence="4">
    <location>
        <begin position="114"/>
        <end position="388"/>
    </location>
</feature>
<feature type="active site" description="Charge relay system" evidence="4">
    <location>
        <position position="146"/>
    </location>
</feature>
<feature type="active site" description="Charge relay system" evidence="4">
    <location>
        <position position="176"/>
    </location>
</feature>
<feature type="active site" description="Charge relay system" evidence="4">
    <location>
        <position position="331"/>
    </location>
</feature>
<feature type="site" description="Important for catalytic activity" evidence="1">
    <location>
        <position position="268"/>
    </location>
</feature>
<feature type="glycosylation site" description="N-linked (GlcNAc...) asparagine" evidence="3">
    <location>
        <position position="232"/>
    </location>
</feature>
<feature type="glycosylation site" description="N-linked (GlcNAc...) asparagine" evidence="3">
    <location>
        <position position="237"/>
    </location>
</feature>
<feature type="disulfide bond" evidence="13">
    <location>
        <begin position="141"/>
        <end position="230"/>
    </location>
</feature>
<feature type="disulfide bond" evidence="13">
    <location>
        <begin position="285"/>
        <end position="357"/>
    </location>
</feature>
<accession>R4IR27</accession>
<name>ASES_SARSR</name>
<comment type="function">
    <text evidence="5 6 7 8">Extracellular elicitor protein that induces a strong defense response in strawberry and confers both local and systemic plant resistance against the fungal pathogen Colletotricum acutatum, the casual agent of anthracnose disease (PubMed:23530047). AsES activates a cascade of defense responses, including calcium influx, oxidative burst, hypersensitive cell-death response (HR), accumulation of autofluorescent compounds, cell-wall reinforcement with callose and lignin deposition, salicylic acid accumulation, and expression of defense-related genes, such as PR1, PG1, MYB30, RBOH-D, RBOH-F, CHI23, and FLS (PubMed:23530047, PubMed:26706064, PubMed:28635519). The oxidative burst consists in a progressive extracellular accumulation of H(2)O(2) that starts immediately after the contact with AsES and is preceded by a rapid and transient cell membrane depolarization. During this phase takes place also a rapid intracellular accumulation of NO at the chloroplasts. After the first extracellular H(2)O(2) production phase, two intracellular H(2)O(2) accumulation events occur, the first 2 hours after induction, and the second 7 hours after induction. AsES also produces a transient increase of ion leakage, and a progressive alkalinization of the extracellular medium (PubMed:26562675). Confers also local and systemic plant resistance against Botrytis cinerea in Arabidopsis thaliana. Systemic, but not local resistance is dependent on the length of exposure to AsES. The protection to B.cinerea is due to the induction of the plant defenses via the salicylic acid, jasmonic acid and ethylene signaling pathways (PubMed:26706064). Exhibits subtilisin-like proteolytic activity which is necessary but not sufficient for its elicitor function in strawberry plants. Probably induces defense by means of proteolysis of one or multiple host proteins that are specific targets of this protease (PubMed:23530047).</text>
</comment>
<comment type="activity regulation">
    <text evidence="5">The elicitor proteolytic activity is completely inhibited by PMSF. The activity is also significantly reduced by aprotinin (leading to 37% residual activity), by leupeptin (leading to 54% residual activity), by the ovomucoid trypsin inhibitor (leading to 65% residual activity), and by p-aminobenzamidine (leading to 26% residual activity).</text>
</comment>
<comment type="subcellular location">
    <subcellularLocation>
        <location evidence="5">Secreted</location>
    </subcellularLocation>
</comment>
<comment type="biotechnology">
    <text evidence="9 10">AsES can be combined well with commercial spray adjuvants, insecticides, herbicides and fungicides without losing any defense-inducing activity. The agricultural biostimulant PSP1, a formulation based on AsES is therefore a very promising candidate to efficiently control multiple fungal diseases under field conditions in monocot and dicot crops.</text>
</comment>
<comment type="similarity">
    <text evidence="12">Belongs to the peptidase S8 family.</text>
</comment>
<evidence type="ECO:0000250" key="1">
    <source>
        <dbReference type="UniProtKB" id="Q5JIZ5"/>
    </source>
</evidence>
<evidence type="ECO:0000255" key="2"/>
<evidence type="ECO:0000255" key="3">
    <source>
        <dbReference type="PROSITE-ProRule" id="PRU00498"/>
    </source>
</evidence>
<evidence type="ECO:0000255" key="4">
    <source>
        <dbReference type="PROSITE-ProRule" id="PRU01240"/>
    </source>
</evidence>
<evidence type="ECO:0000269" key="5">
    <source>
    </source>
</evidence>
<evidence type="ECO:0000269" key="6">
    <source>
    </source>
</evidence>
<evidence type="ECO:0000269" key="7">
    <source>
    </source>
</evidence>
<evidence type="ECO:0000269" key="8">
    <source>
    </source>
</evidence>
<evidence type="ECO:0000269" key="9">
    <source>
    </source>
</evidence>
<evidence type="ECO:0000269" key="10">
    <source>
    </source>
</evidence>
<evidence type="ECO:0000303" key="11">
    <source>
    </source>
</evidence>
<evidence type="ECO:0000305" key="12"/>
<evidence type="ECO:0000305" key="13">
    <source>
    </source>
</evidence>
<organism>
    <name type="scientific">Sarocladium strictum</name>
    <name type="common">Black bundle disease fungus</name>
    <name type="synonym">Acremonium strictum</name>
    <dbReference type="NCBI Taxonomy" id="5046"/>
    <lineage>
        <taxon>Eukaryota</taxon>
        <taxon>Fungi</taxon>
        <taxon>Dikarya</taxon>
        <taxon>Ascomycota</taxon>
        <taxon>Pezizomycotina</taxon>
        <taxon>Sordariomycetes</taxon>
        <taxon>Hypocreomycetidae</taxon>
        <taxon>Hypocreales</taxon>
        <taxon>Sarocladiaceae</taxon>
        <taxon>Sarocladium</taxon>
    </lineage>
</organism>
<protein>
    <recommendedName>
        <fullName evidence="11">Subtilisin-like serine protease AsES</fullName>
        <ecNumber evidence="5">3.4.21.-</ecNumber>
    </recommendedName>
    <alternativeName>
        <fullName evidence="12">Alkaline serine protease AsES</fullName>
    </alternativeName>
    <alternativeName>
        <fullName evidence="11">Extra-cellular elicitor protein AsES</fullName>
    </alternativeName>
</protein>
<sequence length="388" mass="39721">MRLSLVLALLPVAFGAPTRRDEPAPLHVPRDVDSLIKDTYIVKYKDITAFSAVDEGLKLLSGKPKHIYKGAFKGFSGKIDAKTLELLRDDPSVDFIEQDAIVTLAAYTTQASAPWGLARISTRQRGPTGYTYDDSAGAGTCSYIIDTGIQANHPNFGGRAFQLVSYQGSNADGNGHGTHVAGTIGSTTYGVAKRTTLLGVKVLSDSGSGSTSGIIAGINYVVSDSRSRSCPNGSVANMSLGGGYSASLNSAAKSLIDNNIFLAVAAGNENQNAANVSPASEPTVCTVGATTSADAKASFSNYGSGVDIFAPGQSILSTWIGSSTNTISGTSMASPHIAGLAAYLAGLEGFPGAQALCNRIVALATTGVITGLPSGTPNRLAFNGNPSG</sequence>